<keyword id="KW-0687">Ribonucleoprotein</keyword>
<keyword id="KW-0689">Ribosomal protein</keyword>
<evidence type="ECO:0000255" key="1">
    <source>
        <dbReference type="HAMAP-Rule" id="MF_01366"/>
    </source>
</evidence>
<evidence type="ECO:0000305" key="2"/>
<protein>
    <recommendedName>
        <fullName evidence="1">Large ribosomal subunit protein uL13</fullName>
    </recommendedName>
    <alternativeName>
        <fullName evidence="2">50S ribosomal protein L13</fullName>
    </alternativeName>
</protein>
<reference key="1">
    <citation type="journal article" date="2009" name="J. Bacteriol.">
        <title>Complete and draft genome sequences of six members of the Aquificales.</title>
        <authorList>
            <person name="Reysenbach A.-L."/>
            <person name="Hamamura N."/>
            <person name="Podar M."/>
            <person name="Griffiths E."/>
            <person name="Ferreira S."/>
            <person name="Hochstein R."/>
            <person name="Heidelberg J."/>
            <person name="Johnson J."/>
            <person name="Mead D."/>
            <person name="Pohorille A."/>
            <person name="Sarmiento M."/>
            <person name="Schweighofer K."/>
            <person name="Seshadri R."/>
            <person name="Voytek M.A."/>
        </authorList>
    </citation>
    <scope>NUCLEOTIDE SEQUENCE [LARGE SCALE GENOMIC DNA]</scope>
    <source>
        <strain>YO3AOP1</strain>
    </source>
</reference>
<proteinExistence type="inferred from homology"/>
<comment type="function">
    <text evidence="1">This protein is one of the early assembly proteins of the 50S ribosomal subunit, although it is not seen to bind rRNA by itself. It is important during the early stages of 50S assembly.</text>
</comment>
<comment type="subunit">
    <text evidence="1">Part of the 50S ribosomal subunit.</text>
</comment>
<comment type="similarity">
    <text evidence="1">Belongs to the universal ribosomal protein uL13 family.</text>
</comment>
<gene>
    <name evidence="1" type="primary">rplM</name>
    <name type="ordered locus">SYO3AOP1_1729</name>
</gene>
<feature type="chain" id="PRO_1000144186" description="Large ribosomal subunit protein uL13">
    <location>
        <begin position="1"/>
        <end position="150"/>
    </location>
</feature>
<name>RL13_SULSY</name>
<organism>
    <name type="scientific">Sulfurihydrogenibium sp. (strain YO3AOP1)</name>
    <dbReference type="NCBI Taxonomy" id="436114"/>
    <lineage>
        <taxon>Bacteria</taxon>
        <taxon>Pseudomonadati</taxon>
        <taxon>Aquificota</taxon>
        <taxon>Aquificia</taxon>
        <taxon>Aquificales</taxon>
        <taxon>Hydrogenothermaceae</taxon>
        <taxon>Sulfurihydrogenibium</taxon>
    </lineage>
</organism>
<dbReference type="EMBL" id="CP001080">
    <property type="protein sequence ID" value="ACD67326.1"/>
    <property type="molecule type" value="Genomic_DNA"/>
</dbReference>
<dbReference type="RefSeq" id="WP_012460381.1">
    <property type="nucleotide sequence ID" value="NC_010730.1"/>
</dbReference>
<dbReference type="SMR" id="B2V795"/>
<dbReference type="STRING" id="436114.SYO3AOP1_1729"/>
<dbReference type="KEGG" id="sul:SYO3AOP1_1729"/>
<dbReference type="eggNOG" id="COG0102">
    <property type="taxonomic scope" value="Bacteria"/>
</dbReference>
<dbReference type="HOGENOM" id="CLU_082184_2_2_0"/>
<dbReference type="GO" id="GO:0022625">
    <property type="term" value="C:cytosolic large ribosomal subunit"/>
    <property type="evidence" value="ECO:0007669"/>
    <property type="project" value="TreeGrafter"/>
</dbReference>
<dbReference type="GO" id="GO:0003729">
    <property type="term" value="F:mRNA binding"/>
    <property type="evidence" value="ECO:0007669"/>
    <property type="project" value="TreeGrafter"/>
</dbReference>
<dbReference type="GO" id="GO:0003735">
    <property type="term" value="F:structural constituent of ribosome"/>
    <property type="evidence" value="ECO:0007669"/>
    <property type="project" value="InterPro"/>
</dbReference>
<dbReference type="GO" id="GO:0017148">
    <property type="term" value="P:negative regulation of translation"/>
    <property type="evidence" value="ECO:0007669"/>
    <property type="project" value="TreeGrafter"/>
</dbReference>
<dbReference type="GO" id="GO:0006412">
    <property type="term" value="P:translation"/>
    <property type="evidence" value="ECO:0007669"/>
    <property type="project" value="UniProtKB-UniRule"/>
</dbReference>
<dbReference type="CDD" id="cd00392">
    <property type="entry name" value="Ribosomal_L13"/>
    <property type="match status" value="1"/>
</dbReference>
<dbReference type="Gene3D" id="3.90.1180.10">
    <property type="entry name" value="Ribosomal protein L13"/>
    <property type="match status" value="1"/>
</dbReference>
<dbReference type="HAMAP" id="MF_01366">
    <property type="entry name" value="Ribosomal_uL13"/>
    <property type="match status" value="1"/>
</dbReference>
<dbReference type="InterPro" id="IPR005822">
    <property type="entry name" value="Ribosomal_uL13"/>
</dbReference>
<dbReference type="InterPro" id="IPR005823">
    <property type="entry name" value="Ribosomal_uL13_bac-type"/>
</dbReference>
<dbReference type="InterPro" id="IPR036899">
    <property type="entry name" value="Ribosomal_uL13_sf"/>
</dbReference>
<dbReference type="NCBIfam" id="TIGR01066">
    <property type="entry name" value="rplM_bact"/>
    <property type="match status" value="1"/>
</dbReference>
<dbReference type="PANTHER" id="PTHR11545:SF2">
    <property type="entry name" value="LARGE RIBOSOMAL SUBUNIT PROTEIN UL13M"/>
    <property type="match status" value="1"/>
</dbReference>
<dbReference type="PANTHER" id="PTHR11545">
    <property type="entry name" value="RIBOSOMAL PROTEIN L13"/>
    <property type="match status" value="1"/>
</dbReference>
<dbReference type="Pfam" id="PF00572">
    <property type="entry name" value="Ribosomal_L13"/>
    <property type="match status" value="1"/>
</dbReference>
<dbReference type="PIRSF" id="PIRSF002181">
    <property type="entry name" value="Ribosomal_L13"/>
    <property type="match status" value="1"/>
</dbReference>
<dbReference type="SUPFAM" id="SSF52161">
    <property type="entry name" value="Ribosomal protein L13"/>
    <property type="match status" value="1"/>
</dbReference>
<accession>B2V795</accession>
<sequence length="150" mass="17362">MKTFHLRKEDVKRDWYIIDAKGKNLGRLASLIANVLRGKHKPTFQPDVDCGDYVVVINADKFTVTGKKLTDKEYKFHTNAPGGLKVRNLQWMIEHKPTEALALAVERMLPKNKLQKRYMKRLKLYAGETHPHTAQNLKPLEEVSKLWKAI</sequence>